<accession>Q7QGX9</accession>
<feature type="chain" id="PRO_0000304748" description="Mediator of RNA polymerase II transcription subunit 18">
    <location>
        <begin position="1"/>
        <end position="211"/>
    </location>
</feature>
<keyword id="KW-0010">Activator</keyword>
<keyword id="KW-0539">Nucleus</keyword>
<keyword id="KW-1185">Reference proteome</keyword>
<keyword id="KW-0804">Transcription</keyword>
<keyword id="KW-0805">Transcription regulation</keyword>
<protein>
    <recommendedName>
        <fullName>Mediator of RNA polymerase II transcription subunit 18</fullName>
    </recommendedName>
    <alternativeName>
        <fullName>Mediator complex subunit 18</fullName>
    </alternativeName>
</protein>
<organism>
    <name type="scientific">Anopheles gambiae</name>
    <name type="common">African malaria mosquito</name>
    <dbReference type="NCBI Taxonomy" id="7165"/>
    <lineage>
        <taxon>Eukaryota</taxon>
        <taxon>Metazoa</taxon>
        <taxon>Ecdysozoa</taxon>
        <taxon>Arthropoda</taxon>
        <taxon>Hexapoda</taxon>
        <taxon>Insecta</taxon>
        <taxon>Pterygota</taxon>
        <taxon>Neoptera</taxon>
        <taxon>Endopterygota</taxon>
        <taxon>Diptera</taxon>
        <taxon>Nematocera</taxon>
        <taxon>Culicoidea</taxon>
        <taxon>Culicidae</taxon>
        <taxon>Anophelinae</taxon>
        <taxon>Anopheles</taxon>
    </lineage>
</organism>
<comment type="function">
    <text evidence="1">Component of the Mediator complex, a coactivator involved in the regulated transcription of nearly all RNA polymerase II-dependent genes. Mediator functions as a bridge to convey information from gene-specific regulatory proteins to the basal RNA polymerase II transcription machinery. Mediator is recruited to promoters by direct interactions with regulatory proteins and serves as a scaffold for the assembly of a functional preinitiation complex with RNA polymerase II and the general transcription factors (By similarity).</text>
</comment>
<comment type="subunit">
    <text evidence="1">Component of the Mediator complex.</text>
</comment>
<comment type="subcellular location">
    <subcellularLocation>
        <location evidence="2">Nucleus</location>
    </subcellularLocation>
</comment>
<comment type="similarity">
    <text evidence="2">Belongs to the Mediator complex subunit 18 family.</text>
</comment>
<comment type="sequence caution" evidence="2">
    <conflict type="erroneous initiation">
        <sequence resource="EMBL-CDS" id="EAA05528"/>
    </conflict>
</comment>
<reference key="1">
    <citation type="journal article" date="2002" name="Science">
        <title>The genome sequence of the malaria mosquito Anopheles gambiae.</title>
        <authorList>
            <person name="Holt R.A."/>
            <person name="Subramanian G.M."/>
            <person name="Halpern A."/>
            <person name="Sutton G.G."/>
            <person name="Charlab R."/>
            <person name="Nusskern D.R."/>
            <person name="Wincker P."/>
            <person name="Clark A.G."/>
            <person name="Ribeiro J.M.C."/>
            <person name="Wides R."/>
            <person name="Salzberg S.L."/>
            <person name="Loftus B.J."/>
            <person name="Yandell M.D."/>
            <person name="Majoros W.H."/>
            <person name="Rusch D.B."/>
            <person name="Lai Z."/>
            <person name="Kraft C.L."/>
            <person name="Abril J.F."/>
            <person name="Anthouard V."/>
            <person name="Arensburger P."/>
            <person name="Atkinson P.W."/>
            <person name="Baden H."/>
            <person name="de Berardinis V."/>
            <person name="Baldwin D."/>
            <person name="Benes V."/>
            <person name="Biedler J."/>
            <person name="Blass C."/>
            <person name="Bolanos R."/>
            <person name="Boscus D."/>
            <person name="Barnstead M."/>
            <person name="Cai S."/>
            <person name="Center A."/>
            <person name="Chaturverdi K."/>
            <person name="Christophides G.K."/>
            <person name="Chrystal M.A.M."/>
            <person name="Clamp M."/>
            <person name="Cravchik A."/>
            <person name="Curwen V."/>
            <person name="Dana A."/>
            <person name="Delcher A."/>
            <person name="Dew I."/>
            <person name="Evans C.A."/>
            <person name="Flanigan M."/>
            <person name="Grundschober-Freimoser A."/>
            <person name="Friedli L."/>
            <person name="Gu Z."/>
            <person name="Guan P."/>
            <person name="Guigo R."/>
            <person name="Hillenmeyer M.E."/>
            <person name="Hladun S.L."/>
            <person name="Hogan J.R."/>
            <person name="Hong Y.S."/>
            <person name="Hoover J."/>
            <person name="Jaillon O."/>
            <person name="Ke Z."/>
            <person name="Kodira C.D."/>
            <person name="Kokoza E."/>
            <person name="Koutsos A."/>
            <person name="Letunic I."/>
            <person name="Levitsky A.A."/>
            <person name="Liang Y."/>
            <person name="Lin J.-J."/>
            <person name="Lobo N.F."/>
            <person name="Lopez J.R."/>
            <person name="Malek J.A."/>
            <person name="McIntosh T.C."/>
            <person name="Meister S."/>
            <person name="Miller J.R."/>
            <person name="Mobarry C."/>
            <person name="Mongin E."/>
            <person name="Murphy S.D."/>
            <person name="O'Brochta D.A."/>
            <person name="Pfannkoch C."/>
            <person name="Qi R."/>
            <person name="Regier M.A."/>
            <person name="Remington K."/>
            <person name="Shao H."/>
            <person name="Sharakhova M.V."/>
            <person name="Sitter C.D."/>
            <person name="Shetty J."/>
            <person name="Smith T.J."/>
            <person name="Strong R."/>
            <person name="Sun J."/>
            <person name="Thomasova D."/>
            <person name="Ton L.Q."/>
            <person name="Topalis P."/>
            <person name="Tu Z.J."/>
            <person name="Unger M.F."/>
            <person name="Walenz B."/>
            <person name="Wang A.H."/>
            <person name="Wang J."/>
            <person name="Wang M."/>
            <person name="Wang X."/>
            <person name="Woodford K.J."/>
            <person name="Wortman J.R."/>
            <person name="Wu M."/>
            <person name="Yao A."/>
            <person name="Zdobnov E.M."/>
            <person name="Zhang H."/>
            <person name="Zhao Q."/>
            <person name="Zhao S."/>
            <person name="Zhu S.C."/>
            <person name="Zhimulev I."/>
            <person name="Coluzzi M."/>
            <person name="della Torre A."/>
            <person name="Roth C.W."/>
            <person name="Louis C."/>
            <person name="Kalush F."/>
            <person name="Mural R.J."/>
            <person name="Myers E.W."/>
            <person name="Adams M.D."/>
            <person name="Smith H.O."/>
            <person name="Broder S."/>
            <person name="Gardner M.J."/>
            <person name="Fraser C.M."/>
            <person name="Birney E."/>
            <person name="Bork P."/>
            <person name="Brey P.T."/>
            <person name="Venter J.C."/>
            <person name="Weissenbach J."/>
            <person name="Kafatos F.C."/>
            <person name="Collins F.H."/>
            <person name="Hoffman S.L."/>
        </authorList>
    </citation>
    <scope>NUCLEOTIDE SEQUENCE [LARGE SCALE GENOMIC DNA]</scope>
    <source>
        <strain>PEST</strain>
    </source>
</reference>
<gene>
    <name type="primary">MED18</name>
    <name type="ORF">AGAP010936</name>
</gene>
<proteinExistence type="inferred from homology"/>
<sequence>MGAQVNAAELLQQALSSNIIPNQEFLLQGSILDSAAENLLHRLRGLCDNVDASPETFSDIEMCFSLKLPTEKTPVMTVRVRRAQDVEAPLQLRYIGQPELGDRTRPTLVRSSLDIACTPHVIDFLTEMGFRLDFEYSTKGYMFRKGRMKITVSKILKNMTEPISQSYLVELSVLAPKGQDAIAEDMRIFAEQLKPLVQLEKIDYKRFAQMP</sequence>
<evidence type="ECO:0000250" key="1"/>
<evidence type="ECO:0000305" key="2"/>
<dbReference type="EMBL" id="AAAB01008823">
    <property type="protein sequence ID" value="EAA05528.4"/>
    <property type="status" value="ALT_INIT"/>
    <property type="molecule type" value="Genomic_DNA"/>
</dbReference>
<dbReference type="RefSeq" id="XP_309758.4">
    <property type="nucleotide sequence ID" value="XM_309758.5"/>
</dbReference>
<dbReference type="SMR" id="Q7QGX9"/>
<dbReference type="FunCoup" id="Q7QGX9">
    <property type="interactions" value="1328"/>
</dbReference>
<dbReference type="STRING" id="7165.Q7QGX9"/>
<dbReference type="PaxDb" id="7165-AGAP010936-PA"/>
<dbReference type="GeneID" id="1271016"/>
<dbReference type="KEGG" id="aga:1271016"/>
<dbReference type="CTD" id="54797"/>
<dbReference type="VEuPathDB" id="VectorBase:AGAMI1_002843"/>
<dbReference type="VEuPathDB" id="VectorBase:AGAP010936"/>
<dbReference type="eggNOG" id="KOG3264">
    <property type="taxonomic scope" value="Eukaryota"/>
</dbReference>
<dbReference type="HOGENOM" id="CLU_084570_0_0_1"/>
<dbReference type="InParanoid" id="Q7QGX9"/>
<dbReference type="Proteomes" id="UP000007062">
    <property type="component" value="Chromosome 3L"/>
</dbReference>
<dbReference type="GO" id="GO:0070847">
    <property type="term" value="C:core mediator complex"/>
    <property type="evidence" value="ECO:0000318"/>
    <property type="project" value="GO_Central"/>
</dbReference>
<dbReference type="GO" id="GO:0016592">
    <property type="term" value="C:mediator complex"/>
    <property type="evidence" value="ECO:0000318"/>
    <property type="project" value="GO_Central"/>
</dbReference>
<dbReference type="GO" id="GO:0003712">
    <property type="term" value="F:transcription coregulator activity"/>
    <property type="evidence" value="ECO:0000318"/>
    <property type="project" value="GO_Central"/>
</dbReference>
<dbReference type="GO" id="GO:0060261">
    <property type="term" value="P:positive regulation of transcription initiation by RNA polymerase II"/>
    <property type="evidence" value="ECO:0000318"/>
    <property type="project" value="GO_Central"/>
</dbReference>
<dbReference type="FunFam" id="2.40.320.10:FF:000001">
    <property type="entry name" value="Mediator of RNA polymerase II transcription subunit 18"/>
    <property type="match status" value="1"/>
</dbReference>
<dbReference type="Gene3D" id="2.40.320.10">
    <property type="entry name" value="Hypothetical Protein Pfu-838710-001"/>
    <property type="match status" value="1"/>
</dbReference>
<dbReference type="InterPro" id="IPR019095">
    <property type="entry name" value="Mediator_Med18"/>
</dbReference>
<dbReference type="PANTHER" id="PTHR13321:SF2">
    <property type="entry name" value="MEDIATOR OF RNA POLYMERASE II TRANSCRIPTION SUBUNIT 18"/>
    <property type="match status" value="1"/>
</dbReference>
<dbReference type="PANTHER" id="PTHR13321">
    <property type="entry name" value="MEDIATOR OF RNA POLYMERASE II TRANSCRIPTION, SUBUNIT 18"/>
    <property type="match status" value="1"/>
</dbReference>
<dbReference type="Pfam" id="PF09637">
    <property type="entry name" value="Med18"/>
    <property type="match status" value="1"/>
</dbReference>
<name>MED18_ANOGA</name>